<reference key="1">
    <citation type="journal article" date="2000" name="Nature">
        <title>Genome sequence of the endocellular bacterial symbiont of aphids Buchnera sp. APS.</title>
        <authorList>
            <person name="Shigenobu S."/>
            <person name="Watanabe H."/>
            <person name="Hattori M."/>
            <person name="Sakaki Y."/>
            <person name="Ishikawa H."/>
        </authorList>
    </citation>
    <scope>NUCLEOTIDE SEQUENCE [LARGE SCALE GENOMIC DNA]</scope>
    <source>
        <strain>APS</strain>
    </source>
</reference>
<proteinExistence type="inferred from homology"/>
<protein>
    <recommendedName>
        <fullName evidence="1">Ribosomal RNA small subunit methyltransferase C</fullName>
        <ecNumber evidence="1">2.1.1.172</ecNumber>
    </recommendedName>
    <alternativeName>
        <fullName evidence="1">16S rRNA m2G1207 methyltransferase</fullName>
    </alternativeName>
    <alternativeName>
        <fullName evidence="1">rRNA (guanine-N(2)-)-methyltransferase RsmC</fullName>
    </alternativeName>
</protein>
<feature type="chain" id="PRO_0000097487" description="Ribosomal RNA small subunit methyltransferase C">
    <location>
        <begin position="1"/>
        <end position="338"/>
    </location>
</feature>
<name>RSMC_BUCAI</name>
<gene>
    <name evidence="1" type="primary">rsmC</name>
    <name type="ordered locus">BU328</name>
</gene>
<organism>
    <name type="scientific">Buchnera aphidicola subsp. Acyrthosiphon pisum (strain APS)</name>
    <name type="common">Acyrthosiphon pisum symbiotic bacterium</name>
    <dbReference type="NCBI Taxonomy" id="107806"/>
    <lineage>
        <taxon>Bacteria</taxon>
        <taxon>Pseudomonadati</taxon>
        <taxon>Pseudomonadota</taxon>
        <taxon>Gammaproteobacteria</taxon>
        <taxon>Enterobacterales</taxon>
        <taxon>Erwiniaceae</taxon>
        <taxon>Buchnera</taxon>
    </lineage>
</organism>
<keyword id="KW-0963">Cytoplasm</keyword>
<keyword id="KW-0489">Methyltransferase</keyword>
<keyword id="KW-1185">Reference proteome</keyword>
<keyword id="KW-0698">rRNA processing</keyword>
<keyword id="KW-0949">S-adenosyl-L-methionine</keyword>
<keyword id="KW-0808">Transferase</keyword>
<dbReference type="EC" id="2.1.1.172" evidence="1"/>
<dbReference type="EMBL" id="BA000003">
    <property type="protein sequence ID" value="BAB13036.1"/>
    <property type="status" value="ALT_FRAME"/>
    <property type="molecule type" value="Genomic_DNA"/>
</dbReference>
<dbReference type="RefSeq" id="NP_240150.1">
    <property type="nucleotide sequence ID" value="NC_002528.1"/>
</dbReference>
<dbReference type="RefSeq" id="WP_010896070.1">
    <property type="nucleotide sequence ID" value="NZ_AP036055.1"/>
</dbReference>
<dbReference type="SMR" id="P57413"/>
<dbReference type="STRING" id="563178.BUAP5A_321"/>
<dbReference type="EnsemblBacteria" id="BAB13036">
    <property type="protein sequence ID" value="BAB13036"/>
    <property type="gene ID" value="BAB13036"/>
</dbReference>
<dbReference type="KEGG" id="buc:BU328"/>
<dbReference type="PATRIC" id="fig|107806.10.peg.341"/>
<dbReference type="eggNOG" id="COG2813">
    <property type="taxonomic scope" value="Bacteria"/>
</dbReference>
<dbReference type="HOGENOM" id="CLU_049581_0_1_6"/>
<dbReference type="Proteomes" id="UP000001806">
    <property type="component" value="Chromosome"/>
</dbReference>
<dbReference type="GO" id="GO:0005737">
    <property type="term" value="C:cytoplasm"/>
    <property type="evidence" value="ECO:0007669"/>
    <property type="project" value="UniProtKB-SubCell"/>
</dbReference>
<dbReference type="GO" id="GO:0052914">
    <property type="term" value="F:16S rRNA (guanine(1207)-N(2))-methyltransferase activity"/>
    <property type="evidence" value="ECO:0007669"/>
    <property type="project" value="UniProtKB-EC"/>
</dbReference>
<dbReference type="GO" id="GO:0003676">
    <property type="term" value="F:nucleic acid binding"/>
    <property type="evidence" value="ECO:0007669"/>
    <property type="project" value="InterPro"/>
</dbReference>
<dbReference type="CDD" id="cd02440">
    <property type="entry name" value="AdoMet_MTases"/>
    <property type="match status" value="1"/>
</dbReference>
<dbReference type="Gene3D" id="3.40.50.150">
    <property type="entry name" value="Vaccinia Virus protein VP39"/>
    <property type="match status" value="2"/>
</dbReference>
<dbReference type="HAMAP" id="MF_01862">
    <property type="entry name" value="16SrRNA_methyltr_C"/>
    <property type="match status" value="1"/>
</dbReference>
<dbReference type="InterPro" id="IPR002052">
    <property type="entry name" value="DNA_methylase_N6_adenine_CS"/>
</dbReference>
<dbReference type="InterPro" id="IPR013675">
    <property type="entry name" value="Mtase_sm_N"/>
</dbReference>
<dbReference type="InterPro" id="IPR023543">
    <property type="entry name" value="rRNA_ssu_MeTfrase_C"/>
</dbReference>
<dbReference type="InterPro" id="IPR046977">
    <property type="entry name" value="RsmC/RlmG"/>
</dbReference>
<dbReference type="InterPro" id="IPR029063">
    <property type="entry name" value="SAM-dependent_MTases_sf"/>
</dbReference>
<dbReference type="InterPro" id="IPR007848">
    <property type="entry name" value="Small_mtfrase_dom"/>
</dbReference>
<dbReference type="NCBIfam" id="NF007023">
    <property type="entry name" value="PRK09489.1"/>
    <property type="match status" value="1"/>
</dbReference>
<dbReference type="PANTHER" id="PTHR47816">
    <property type="entry name" value="RIBOSOMAL RNA SMALL SUBUNIT METHYLTRANSFERASE C"/>
    <property type="match status" value="1"/>
</dbReference>
<dbReference type="PANTHER" id="PTHR47816:SF4">
    <property type="entry name" value="RIBOSOMAL RNA SMALL SUBUNIT METHYLTRANSFERASE C"/>
    <property type="match status" value="1"/>
</dbReference>
<dbReference type="Pfam" id="PF05175">
    <property type="entry name" value="MTS"/>
    <property type="match status" value="1"/>
</dbReference>
<dbReference type="Pfam" id="PF08468">
    <property type="entry name" value="MTS_N"/>
    <property type="match status" value="1"/>
</dbReference>
<dbReference type="SUPFAM" id="SSF53335">
    <property type="entry name" value="S-adenosyl-L-methionine-dependent methyltransferases"/>
    <property type="match status" value="1"/>
</dbReference>
<sequence>MLLSKNSQLILRHRKKFKTKKVFFSGNIQDDFPLSLSTMRTKINFHKYNDCIDFKKKIMNNNIVHNNLLISQEMIQNCDVIIYYWPKDKSEAKFQLMNIISCSPINTEIFIVGNNSSGVKSAPLMLKKWIELEKIDSAKHSILISGLIKKKAIFVLEDFFKTHLWKNLIIKSLPGVFGHKKIDSGSKLLASTFSNRITGKVLDIGCGTGFLSASLLYFSPDAILTLVDNNMYALKCSQYTLNSNKFNGKIVYSNLYSNVFKKFDLIISNPPFHNDLQINFNIIEKMICGAKKYLTKTGELRFVTSRFINCHFLLNKFFQKYYVIKETSQYKVYQAFYK</sequence>
<accession>P57413</accession>
<evidence type="ECO:0000255" key="1">
    <source>
        <dbReference type="HAMAP-Rule" id="MF_01862"/>
    </source>
</evidence>
<evidence type="ECO:0000305" key="2"/>
<comment type="function">
    <text evidence="1">Specifically methylates the guanine in position 1207 of 16S rRNA in the 30S particle.</text>
</comment>
<comment type="catalytic activity">
    <reaction evidence="1">
        <text>guanosine(1207) in 16S rRNA + S-adenosyl-L-methionine = N(2)-methylguanosine(1207) in 16S rRNA + S-adenosyl-L-homocysteine + H(+)</text>
        <dbReference type="Rhea" id="RHEA:42736"/>
        <dbReference type="Rhea" id="RHEA-COMP:10213"/>
        <dbReference type="Rhea" id="RHEA-COMP:10214"/>
        <dbReference type="ChEBI" id="CHEBI:15378"/>
        <dbReference type="ChEBI" id="CHEBI:57856"/>
        <dbReference type="ChEBI" id="CHEBI:59789"/>
        <dbReference type="ChEBI" id="CHEBI:74269"/>
        <dbReference type="ChEBI" id="CHEBI:74481"/>
        <dbReference type="EC" id="2.1.1.172"/>
    </reaction>
</comment>
<comment type="subunit">
    <text evidence="1">Monomer.</text>
</comment>
<comment type="subcellular location">
    <subcellularLocation>
        <location evidence="1">Cytoplasm</location>
    </subcellularLocation>
</comment>
<comment type="similarity">
    <text evidence="1">Belongs to the methyltransferase superfamily. RsmC family.</text>
</comment>
<comment type="sequence caution" evidence="2">
    <conflict type="frameshift">
        <sequence resource="EMBL-CDS" id="BAB13036"/>
    </conflict>
</comment>